<feature type="chain" id="PRO_1000003226" description="Ribosome-recycling factor">
    <location>
        <begin position="1"/>
        <end position="182"/>
    </location>
</feature>
<protein>
    <recommendedName>
        <fullName evidence="1">Ribosome-recycling factor</fullName>
        <shortName evidence="1">RRF</shortName>
    </recommendedName>
    <alternativeName>
        <fullName evidence="1">Ribosome-releasing factor</fullName>
    </alternativeName>
</protein>
<reference key="1">
    <citation type="journal article" date="2007" name="PLoS Genet.">
        <title>Patterns and implications of gene gain and loss in the evolution of Prochlorococcus.</title>
        <authorList>
            <person name="Kettler G.C."/>
            <person name="Martiny A.C."/>
            <person name="Huang K."/>
            <person name="Zucker J."/>
            <person name="Coleman M.L."/>
            <person name="Rodrigue S."/>
            <person name="Chen F."/>
            <person name="Lapidus A."/>
            <person name="Ferriera S."/>
            <person name="Johnson J."/>
            <person name="Steglich C."/>
            <person name="Church G.M."/>
            <person name="Richardson P."/>
            <person name="Chisholm S.W."/>
        </authorList>
    </citation>
    <scope>NUCLEOTIDE SEQUENCE [LARGE SCALE GENOMIC DNA]</scope>
    <source>
        <strain>AS9601</strain>
    </source>
</reference>
<organism>
    <name type="scientific">Prochlorococcus marinus (strain AS9601)</name>
    <dbReference type="NCBI Taxonomy" id="146891"/>
    <lineage>
        <taxon>Bacteria</taxon>
        <taxon>Bacillati</taxon>
        <taxon>Cyanobacteriota</taxon>
        <taxon>Cyanophyceae</taxon>
        <taxon>Synechococcales</taxon>
        <taxon>Prochlorococcaceae</taxon>
        <taxon>Prochlorococcus</taxon>
    </lineage>
</organism>
<comment type="function">
    <text evidence="1">Responsible for the release of ribosomes from messenger RNA at the termination of protein biosynthesis. May increase the efficiency of translation by recycling ribosomes from one round of translation to another.</text>
</comment>
<comment type="subcellular location">
    <subcellularLocation>
        <location evidence="1">Cytoplasm</location>
    </subcellularLocation>
</comment>
<comment type="similarity">
    <text evidence="1">Belongs to the RRF family.</text>
</comment>
<name>RRF_PROMS</name>
<gene>
    <name evidence="1" type="primary">frr</name>
    <name type="ordered locus">A9601_05771</name>
</gene>
<accession>A2BQ02</accession>
<dbReference type="EMBL" id="CP000551">
    <property type="protein sequence ID" value="ABM69863.1"/>
    <property type="molecule type" value="Genomic_DNA"/>
</dbReference>
<dbReference type="RefSeq" id="WP_011818029.1">
    <property type="nucleotide sequence ID" value="NC_008816.1"/>
</dbReference>
<dbReference type="SMR" id="A2BQ02"/>
<dbReference type="STRING" id="146891.A9601_05771"/>
<dbReference type="KEGG" id="pmb:A9601_05771"/>
<dbReference type="eggNOG" id="COG0233">
    <property type="taxonomic scope" value="Bacteria"/>
</dbReference>
<dbReference type="HOGENOM" id="CLU_073981_2_0_3"/>
<dbReference type="OrthoDB" id="9804006at2"/>
<dbReference type="Proteomes" id="UP000002590">
    <property type="component" value="Chromosome"/>
</dbReference>
<dbReference type="GO" id="GO:0005737">
    <property type="term" value="C:cytoplasm"/>
    <property type="evidence" value="ECO:0007669"/>
    <property type="project" value="UniProtKB-SubCell"/>
</dbReference>
<dbReference type="GO" id="GO:0043023">
    <property type="term" value="F:ribosomal large subunit binding"/>
    <property type="evidence" value="ECO:0007669"/>
    <property type="project" value="TreeGrafter"/>
</dbReference>
<dbReference type="GO" id="GO:0006415">
    <property type="term" value="P:translational termination"/>
    <property type="evidence" value="ECO:0007669"/>
    <property type="project" value="UniProtKB-UniRule"/>
</dbReference>
<dbReference type="CDD" id="cd00520">
    <property type="entry name" value="RRF"/>
    <property type="match status" value="1"/>
</dbReference>
<dbReference type="FunFam" id="1.10.132.20:FF:000001">
    <property type="entry name" value="Ribosome-recycling factor"/>
    <property type="match status" value="1"/>
</dbReference>
<dbReference type="FunFam" id="3.30.1360.40:FF:000001">
    <property type="entry name" value="Ribosome-recycling factor"/>
    <property type="match status" value="1"/>
</dbReference>
<dbReference type="Gene3D" id="3.30.1360.40">
    <property type="match status" value="1"/>
</dbReference>
<dbReference type="Gene3D" id="1.10.132.20">
    <property type="entry name" value="Ribosome-recycling factor"/>
    <property type="match status" value="1"/>
</dbReference>
<dbReference type="HAMAP" id="MF_00040">
    <property type="entry name" value="RRF"/>
    <property type="match status" value="1"/>
</dbReference>
<dbReference type="InterPro" id="IPR002661">
    <property type="entry name" value="Ribosome_recyc_fac"/>
</dbReference>
<dbReference type="InterPro" id="IPR023584">
    <property type="entry name" value="Ribosome_recyc_fac_dom"/>
</dbReference>
<dbReference type="InterPro" id="IPR036191">
    <property type="entry name" value="RRF_sf"/>
</dbReference>
<dbReference type="NCBIfam" id="TIGR00496">
    <property type="entry name" value="frr"/>
    <property type="match status" value="1"/>
</dbReference>
<dbReference type="PANTHER" id="PTHR20982:SF3">
    <property type="entry name" value="MITOCHONDRIAL RIBOSOME RECYCLING FACTOR PSEUDO 1"/>
    <property type="match status" value="1"/>
</dbReference>
<dbReference type="PANTHER" id="PTHR20982">
    <property type="entry name" value="RIBOSOME RECYCLING FACTOR"/>
    <property type="match status" value="1"/>
</dbReference>
<dbReference type="Pfam" id="PF01765">
    <property type="entry name" value="RRF"/>
    <property type="match status" value="1"/>
</dbReference>
<dbReference type="SUPFAM" id="SSF55194">
    <property type="entry name" value="Ribosome recycling factor, RRF"/>
    <property type="match status" value="1"/>
</dbReference>
<proteinExistence type="inferred from homology"/>
<evidence type="ECO:0000255" key="1">
    <source>
        <dbReference type="HAMAP-Rule" id="MF_00040"/>
    </source>
</evidence>
<keyword id="KW-0963">Cytoplasm</keyword>
<keyword id="KW-0648">Protein biosynthesis</keyword>
<sequence>MKEKEIQENMNKSIEATQRNFNTIRTGRANASLLDRVSVEYYGAETPIKSLATISTVDSQTISIQPFDISCLQAIEKSISMSDLGITPNNDGKVIRINVPPLTEERRKEFCKLASKYAEEGKVALRNIRRDAVDKEKKDEKDGLISIDESRDNQSEIQKITDKYIALIETKLSEKEKEILKV</sequence>